<accession>A2RIR4</accession>
<gene>
    <name evidence="1" type="primary">prfA</name>
    <name type="ordered locus">llmg_0557</name>
</gene>
<dbReference type="EMBL" id="AM406671">
    <property type="protein sequence ID" value="CAL97159.1"/>
    <property type="molecule type" value="Genomic_DNA"/>
</dbReference>
<dbReference type="RefSeq" id="WP_011834583.1">
    <property type="nucleotide sequence ID" value="NC_009004.1"/>
</dbReference>
<dbReference type="SMR" id="A2RIR4"/>
<dbReference type="STRING" id="416870.llmg_0557"/>
<dbReference type="KEGG" id="llm:llmg_0557"/>
<dbReference type="eggNOG" id="COG0216">
    <property type="taxonomic scope" value="Bacteria"/>
</dbReference>
<dbReference type="HOGENOM" id="CLU_036856_0_1_9"/>
<dbReference type="OrthoDB" id="9806673at2"/>
<dbReference type="PhylomeDB" id="A2RIR4"/>
<dbReference type="Proteomes" id="UP000000364">
    <property type="component" value="Chromosome"/>
</dbReference>
<dbReference type="GO" id="GO:0005737">
    <property type="term" value="C:cytoplasm"/>
    <property type="evidence" value="ECO:0007669"/>
    <property type="project" value="UniProtKB-SubCell"/>
</dbReference>
<dbReference type="GO" id="GO:0016149">
    <property type="term" value="F:translation release factor activity, codon specific"/>
    <property type="evidence" value="ECO:0007669"/>
    <property type="project" value="UniProtKB-UniRule"/>
</dbReference>
<dbReference type="FunFam" id="3.30.160.20:FF:000027">
    <property type="entry name" value="Peptide chain release factor 1"/>
    <property type="match status" value="1"/>
</dbReference>
<dbReference type="FunFam" id="3.30.70.1660:FF:000002">
    <property type="entry name" value="Peptide chain release factor 1"/>
    <property type="match status" value="1"/>
</dbReference>
<dbReference type="FunFam" id="3.30.70.1660:FF:000004">
    <property type="entry name" value="Peptide chain release factor 1"/>
    <property type="match status" value="1"/>
</dbReference>
<dbReference type="Gene3D" id="3.30.160.20">
    <property type="match status" value="1"/>
</dbReference>
<dbReference type="Gene3D" id="3.30.70.1660">
    <property type="match status" value="2"/>
</dbReference>
<dbReference type="Gene3D" id="6.10.140.1950">
    <property type="match status" value="1"/>
</dbReference>
<dbReference type="HAMAP" id="MF_00093">
    <property type="entry name" value="Rel_fac_1"/>
    <property type="match status" value="1"/>
</dbReference>
<dbReference type="InterPro" id="IPR005139">
    <property type="entry name" value="PCRF"/>
</dbReference>
<dbReference type="InterPro" id="IPR000352">
    <property type="entry name" value="Pep_chain_release_fac_I"/>
</dbReference>
<dbReference type="InterPro" id="IPR045853">
    <property type="entry name" value="Pep_chain_release_fac_I_sf"/>
</dbReference>
<dbReference type="InterPro" id="IPR050057">
    <property type="entry name" value="Prokaryotic/Mito_RF"/>
</dbReference>
<dbReference type="InterPro" id="IPR004373">
    <property type="entry name" value="RF-1"/>
</dbReference>
<dbReference type="NCBIfam" id="TIGR00019">
    <property type="entry name" value="prfA"/>
    <property type="match status" value="1"/>
</dbReference>
<dbReference type="NCBIfam" id="NF001859">
    <property type="entry name" value="PRK00591.1"/>
    <property type="match status" value="1"/>
</dbReference>
<dbReference type="PANTHER" id="PTHR43804">
    <property type="entry name" value="LD18447P"/>
    <property type="match status" value="1"/>
</dbReference>
<dbReference type="PANTHER" id="PTHR43804:SF7">
    <property type="entry name" value="LD18447P"/>
    <property type="match status" value="1"/>
</dbReference>
<dbReference type="Pfam" id="PF03462">
    <property type="entry name" value="PCRF"/>
    <property type="match status" value="1"/>
</dbReference>
<dbReference type="Pfam" id="PF00472">
    <property type="entry name" value="RF-1"/>
    <property type="match status" value="1"/>
</dbReference>
<dbReference type="SMART" id="SM00937">
    <property type="entry name" value="PCRF"/>
    <property type="match status" value="1"/>
</dbReference>
<dbReference type="SUPFAM" id="SSF75620">
    <property type="entry name" value="Release factor"/>
    <property type="match status" value="1"/>
</dbReference>
<dbReference type="PROSITE" id="PS00745">
    <property type="entry name" value="RF_PROK_I"/>
    <property type="match status" value="1"/>
</dbReference>
<feature type="chain" id="PRO_1000004904" description="Peptide chain release factor 1">
    <location>
        <begin position="1"/>
        <end position="357"/>
    </location>
</feature>
<feature type="modified residue" description="N5-methylglutamine" evidence="1">
    <location>
        <position position="234"/>
    </location>
</feature>
<protein>
    <recommendedName>
        <fullName evidence="1">Peptide chain release factor 1</fullName>
        <shortName evidence="1">RF-1</shortName>
    </recommendedName>
</protein>
<organism>
    <name type="scientific">Lactococcus lactis subsp. cremoris (strain MG1363)</name>
    <dbReference type="NCBI Taxonomy" id="416870"/>
    <lineage>
        <taxon>Bacteria</taxon>
        <taxon>Bacillati</taxon>
        <taxon>Bacillota</taxon>
        <taxon>Bacilli</taxon>
        <taxon>Lactobacillales</taxon>
        <taxon>Streptococcaceae</taxon>
        <taxon>Lactococcus</taxon>
        <taxon>Lactococcus cremoris subsp. cremoris</taxon>
    </lineage>
</organism>
<name>RF1_LACLM</name>
<sequence length="357" mass="40449">MFDQLESIVGRYEELGELLSDPEVVSDTKRFMELSREEADLRDKVATYNEYKKVLETISDSEEMLGEGGLDDEMKEMLKEELSSAKSQKEVLEEEIKILLLPKDPNDGKNIILEIRGAAGGDEAALFAGDLLNMYQHFSESQGWKFEIMEANITGIGGYKEVSALISGPSVYSKLKYESGAHRVQRVPVTETQGRVHTSTATVLVMPEVEEFEMTIEQKDLRVDIYHASGAGGQNVNKVATAVRMVHLPTGIKVEMQEERTQQKNRDKAIKLLNTKVFDYYQQIELDKQNTERKSTVGTGDRSERIRTYNFPQNRVTDHRIGLTLQKLDSILSGKMDEVIDALIVYDQTKKLEELNK</sequence>
<reference key="1">
    <citation type="journal article" date="2007" name="J. Bacteriol.">
        <title>The complete genome sequence of the lactic acid bacterial paradigm Lactococcus lactis subsp. cremoris MG1363.</title>
        <authorList>
            <person name="Wegmann U."/>
            <person name="O'Connell-Motherway M."/>
            <person name="Zomer A."/>
            <person name="Buist G."/>
            <person name="Shearman C."/>
            <person name="Canchaya C."/>
            <person name="Ventura M."/>
            <person name="Goesmann A."/>
            <person name="Gasson M.J."/>
            <person name="Kuipers O.P."/>
            <person name="van Sinderen D."/>
            <person name="Kok J."/>
        </authorList>
    </citation>
    <scope>NUCLEOTIDE SEQUENCE [LARGE SCALE GENOMIC DNA]</scope>
    <source>
        <strain>MG1363</strain>
    </source>
</reference>
<keyword id="KW-0963">Cytoplasm</keyword>
<keyword id="KW-0488">Methylation</keyword>
<keyword id="KW-0648">Protein biosynthesis</keyword>
<proteinExistence type="inferred from homology"/>
<comment type="function">
    <text evidence="1">Peptide chain release factor 1 directs the termination of translation in response to the peptide chain termination codons UAG and UAA.</text>
</comment>
<comment type="subcellular location">
    <subcellularLocation>
        <location evidence="1">Cytoplasm</location>
    </subcellularLocation>
</comment>
<comment type="PTM">
    <text evidence="1">Methylated by PrmC. Methylation increases the termination efficiency of RF1.</text>
</comment>
<comment type="similarity">
    <text evidence="1">Belongs to the prokaryotic/mitochondrial release factor family.</text>
</comment>
<evidence type="ECO:0000255" key="1">
    <source>
        <dbReference type="HAMAP-Rule" id="MF_00093"/>
    </source>
</evidence>